<accession>A5IBE1</accession>
<reference key="1">
    <citation type="submission" date="2006-11" db="EMBL/GenBank/DDBJ databases">
        <title>Identification and characterization of a new conjugation/ type IVA secretion system (trb/tra) of L. pneumophila Corby localized on a mobile genomic island.</title>
        <authorList>
            <person name="Gloeckner G."/>
            <person name="Albert-Weissenberger C."/>
            <person name="Weinmann E."/>
            <person name="Jacobi S."/>
            <person name="Schunder E."/>
            <person name="Steinert M."/>
            <person name="Buchrieser C."/>
            <person name="Hacker J."/>
            <person name="Heuner K."/>
        </authorList>
    </citation>
    <scope>NUCLEOTIDE SEQUENCE [LARGE SCALE GENOMIC DNA]</scope>
    <source>
        <strain>Corby</strain>
    </source>
</reference>
<gene>
    <name evidence="1" type="primary">ruvA</name>
    <name type="ordered locus">LPC_0713</name>
</gene>
<keyword id="KW-0963">Cytoplasm</keyword>
<keyword id="KW-0227">DNA damage</keyword>
<keyword id="KW-0233">DNA recombination</keyword>
<keyword id="KW-0234">DNA repair</keyword>
<keyword id="KW-0238">DNA-binding</keyword>
<name>RUVA_LEGPC</name>
<organism>
    <name type="scientific">Legionella pneumophila (strain Corby)</name>
    <dbReference type="NCBI Taxonomy" id="400673"/>
    <lineage>
        <taxon>Bacteria</taxon>
        <taxon>Pseudomonadati</taxon>
        <taxon>Pseudomonadota</taxon>
        <taxon>Gammaproteobacteria</taxon>
        <taxon>Legionellales</taxon>
        <taxon>Legionellaceae</taxon>
        <taxon>Legionella</taxon>
    </lineage>
</organism>
<comment type="function">
    <text evidence="1">The RuvA-RuvB-RuvC complex processes Holliday junction (HJ) DNA during genetic recombination and DNA repair, while the RuvA-RuvB complex plays an important role in the rescue of blocked DNA replication forks via replication fork reversal (RFR). RuvA specifically binds to HJ cruciform DNA, conferring on it an open structure. The RuvB hexamer acts as an ATP-dependent pump, pulling dsDNA into and through the RuvAB complex. HJ branch migration allows RuvC to scan DNA until it finds its consensus sequence, where it cleaves and resolves the cruciform DNA.</text>
</comment>
<comment type="subunit">
    <text evidence="1">Homotetramer. Forms an RuvA(8)-RuvB(12)-Holliday junction (HJ) complex. HJ DNA is sandwiched between 2 RuvA tetramers; dsDNA enters through RuvA and exits via RuvB. An RuvB hexamer assembles on each DNA strand where it exits the tetramer. Each RuvB hexamer is contacted by two RuvA subunits (via domain III) on 2 adjacent RuvB subunits; this complex drives branch migration. In the full resolvosome a probable DNA-RuvA(4)-RuvB(12)-RuvC(2) complex forms which resolves the HJ.</text>
</comment>
<comment type="subcellular location">
    <subcellularLocation>
        <location evidence="1">Cytoplasm</location>
    </subcellularLocation>
</comment>
<comment type="domain">
    <text evidence="1">Has three domains with a flexible linker between the domains II and III and assumes an 'L' shape. Domain III is highly mobile and contacts RuvB.</text>
</comment>
<comment type="similarity">
    <text evidence="1">Belongs to the RuvA family.</text>
</comment>
<evidence type="ECO:0000255" key="1">
    <source>
        <dbReference type="HAMAP-Rule" id="MF_00031"/>
    </source>
</evidence>
<protein>
    <recommendedName>
        <fullName evidence="1">Holliday junction branch migration complex subunit RuvA</fullName>
    </recommendedName>
</protein>
<dbReference type="EMBL" id="CP000675">
    <property type="protein sequence ID" value="ABQ54691.1"/>
    <property type="molecule type" value="Genomic_DNA"/>
</dbReference>
<dbReference type="RefSeq" id="WP_011213600.1">
    <property type="nucleotide sequence ID" value="NZ_JAPMSS010000002.1"/>
</dbReference>
<dbReference type="SMR" id="A5IBE1"/>
<dbReference type="KEGG" id="lpc:LPC_0713"/>
<dbReference type="HOGENOM" id="CLU_087936_0_0_6"/>
<dbReference type="GO" id="GO:0005737">
    <property type="term" value="C:cytoplasm"/>
    <property type="evidence" value="ECO:0007669"/>
    <property type="project" value="UniProtKB-SubCell"/>
</dbReference>
<dbReference type="GO" id="GO:0009379">
    <property type="term" value="C:Holliday junction helicase complex"/>
    <property type="evidence" value="ECO:0007669"/>
    <property type="project" value="InterPro"/>
</dbReference>
<dbReference type="GO" id="GO:0048476">
    <property type="term" value="C:Holliday junction resolvase complex"/>
    <property type="evidence" value="ECO:0007669"/>
    <property type="project" value="UniProtKB-UniRule"/>
</dbReference>
<dbReference type="GO" id="GO:0005524">
    <property type="term" value="F:ATP binding"/>
    <property type="evidence" value="ECO:0007669"/>
    <property type="project" value="InterPro"/>
</dbReference>
<dbReference type="GO" id="GO:0000400">
    <property type="term" value="F:four-way junction DNA binding"/>
    <property type="evidence" value="ECO:0007669"/>
    <property type="project" value="UniProtKB-UniRule"/>
</dbReference>
<dbReference type="GO" id="GO:0009378">
    <property type="term" value="F:four-way junction helicase activity"/>
    <property type="evidence" value="ECO:0007669"/>
    <property type="project" value="InterPro"/>
</dbReference>
<dbReference type="GO" id="GO:0006310">
    <property type="term" value="P:DNA recombination"/>
    <property type="evidence" value="ECO:0007669"/>
    <property type="project" value="UniProtKB-UniRule"/>
</dbReference>
<dbReference type="GO" id="GO:0006281">
    <property type="term" value="P:DNA repair"/>
    <property type="evidence" value="ECO:0007669"/>
    <property type="project" value="UniProtKB-UniRule"/>
</dbReference>
<dbReference type="CDD" id="cd14332">
    <property type="entry name" value="UBA_RuvA_C"/>
    <property type="match status" value="1"/>
</dbReference>
<dbReference type="Gene3D" id="1.10.150.20">
    <property type="entry name" value="5' to 3' exonuclease, C-terminal subdomain"/>
    <property type="match status" value="1"/>
</dbReference>
<dbReference type="Gene3D" id="1.10.8.10">
    <property type="entry name" value="DNA helicase RuvA subunit, C-terminal domain"/>
    <property type="match status" value="1"/>
</dbReference>
<dbReference type="Gene3D" id="2.40.50.140">
    <property type="entry name" value="Nucleic acid-binding proteins"/>
    <property type="match status" value="1"/>
</dbReference>
<dbReference type="HAMAP" id="MF_00031">
    <property type="entry name" value="DNA_HJ_migration_RuvA"/>
    <property type="match status" value="1"/>
</dbReference>
<dbReference type="InterPro" id="IPR013849">
    <property type="entry name" value="DNA_helicase_Holl-junc_RuvA_I"/>
</dbReference>
<dbReference type="InterPro" id="IPR003583">
    <property type="entry name" value="Hlx-hairpin-Hlx_DNA-bd_motif"/>
</dbReference>
<dbReference type="InterPro" id="IPR012340">
    <property type="entry name" value="NA-bd_OB-fold"/>
</dbReference>
<dbReference type="InterPro" id="IPR000085">
    <property type="entry name" value="RuvA"/>
</dbReference>
<dbReference type="InterPro" id="IPR010994">
    <property type="entry name" value="RuvA_2-like"/>
</dbReference>
<dbReference type="InterPro" id="IPR011114">
    <property type="entry name" value="RuvA_C"/>
</dbReference>
<dbReference type="InterPro" id="IPR036267">
    <property type="entry name" value="RuvA_C_sf"/>
</dbReference>
<dbReference type="NCBIfam" id="TIGR00084">
    <property type="entry name" value="ruvA"/>
    <property type="match status" value="1"/>
</dbReference>
<dbReference type="Pfam" id="PF14520">
    <property type="entry name" value="HHH_5"/>
    <property type="match status" value="1"/>
</dbReference>
<dbReference type="Pfam" id="PF07499">
    <property type="entry name" value="RuvA_C"/>
    <property type="match status" value="1"/>
</dbReference>
<dbReference type="Pfam" id="PF01330">
    <property type="entry name" value="RuvA_N"/>
    <property type="match status" value="1"/>
</dbReference>
<dbReference type="SMART" id="SM00278">
    <property type="entry name" value="HhH1"/>
    <property type="match status" value="2"/>
</dbReference>
<dbReference type="SUPFAM" id="SSF46929">
    <property type="entry name" value="DNA helicase RuvA subunit, C-terminal domain"/>
    <property type="match status" value="1"/>
</dbReference>
<dbReference type="SUPFAM" id="SSF50249">
    <property type="entry name" value="Nucleic acid-binding proteins"/>
    <property type="match status" value="1"/>
</dbReference>
<dbReference type="SUPFAM" id="SSF47781">
    <property type="entry name" value="RuvA domain 2-like"/>
    <property type="match status" value="1"/>
</dbReference>
<feature type="chain" id="PRO_1000002476" description="Holliday junction branch migration complex subunit RuvA">
    <location>
        <begin position="1"/>
        <end position="199"/>
    </location>
</feature>
<feature type="region of interest" description="Domain I" evidence="1">
    <location>
        <begin position="1"/>
        <end position="65"/>
    </location>
</feature>
<feature type="region of interest" description="Domain II" evidence="1">
    <location>
        <begin position="66"/>
        <end position="144"/>
    </location>
</feature>
<feature type="region of interest" description="Flexible linker" evidence="1">
    <location>
        <begin position="144"/>
        <end position="148"/>
    </location>
</feature>
<feature type="region of interest" description="Domain III" evidence="1">
    <location>
        <begin position="149"/>
        <end position="199"/>
    </location>
</feature>
<proteinExistence type="inferred from homology"/>
<sequence length="199" mass="22107">MIGWLHGQIIDKHQPGKLVLDVNGVGYDVETSLNTFFQIENGNQPIGLHIHTIVREDALLLYGFLDKEERSLFRSLIKVNGVGPKLAMTVLSSISPKEFIQCIHQENAALLTKLPGIGKKTAERLVVEMRDSIKQFDGSVSDTFQKQAGSTHSQQEAISALEALGYKPQEAWKVVNKIDNGNKSCEQLIREALQILSSR</sequence>